<feature type="chain" id="PRO_1000004856" description="Peptide chain release factor 1">
    <location>
        <begin position="1"/>
        <end position="362"/>
    </location>
</feature>
<feature type="modified residue" description="N5-methylglutamine" evidence="1">
    <location>
        <position position="237"/>
    </location>
</feature>
<sequence>MNPSLIRKLEGLIERHEEVQAMLGEPGVASDQDRYRALTREYAQLEDIVHAFQRFRQAEENLEATKLMLEEDDADLREMAQEELPLAKSTLEEQEQALQVMLLPRDPKDDNNCYLEIRAGAGGDEAAIFAGDLFRMYSRYAERQGWRISIVSCNDGEHGGYKEVIAKVDGEHVYGRLKFESGGHRVQRVPETESQGRVHTSACTVAVLPEVPEAEQIEINANDLKIDTFRASGAGGQHVNKTDSAIRITHLPTGLVVECQDERSQHKNRAKAMSVLSARLQAAEDERHRAAEQSTRRNLVGSGDRSERIRTYNYPQGRLSEHRINLTLYRLGEIMEGDLDCIISPMIQEYQADQLASLAENS</sequence>
<accession>A4SK64</accession>
<keyword id="KW-0963">Cytoplasm</keyword>
<keyword id="KW-0488">Methylation</keyword>
<keyword id="KW-0648">Protein biosynthesis</keyword>
<evidence type="ECO:0000255" key="1">
    <source>
        <dbReference type="HAMAP-Rule" id="MF_00093"/>
    </source>
</evidence>
<protein>
    <recommendedName>
        <fullName evidence="1">Peptide chain release factor 1</fullName>
        <shortName evidence="1">RF-1</shortName>
    </recommendedName>
</protein>
<comment type="function">
    <text evidence="1">Peptide chain release factor 1 directs the termination of translation in response to the peptide chain termination codons UAG and UAA.</text>
</comment>
<comment type="subcellular location">
    <subcellularLocation>
        <location evidence="1">Cytoplasm</location>
    </subcellularLocation>
</comment>
<comment type="PTM">
    <text evidence="1">Methylated by PrmC. Methylation increases the termination efficiency of RF1.</text>
</comment>
<comment type="similarity">
    <text evidence="1">Belongs to the prokaryotic/mitochondrial release factor family.</text>
</comment>
<gene>
    <name evidence="1" type="primary">prfA</name>
    <name type="ordered locus">ASA_1175</name>
</gene>
<proteinExistence type="inferred from homology"/>
<dbReference type="EMBL" id="CP000644">
    <property type="protein sequence ID" value="ABO89286.1"/>
    <property type="molecule type" value="Genomic_DNA"/>
</dbReference>
<dbReference type="RefSeq" id="WP_005317010.1">
    <property type="nucleotide sequence ID" value="NC_009348.1"/>
</dbReference>
<dbReference type="SMR" id="A4SK64"/>
<dbReference type="STRING" id="29491.GCA_000820065_02902"/>
<dbReference type="GeneID" id="92722411"/>
<dbReference type="KEGG" id="asa:ASA_1175"/>
<dbReference type="eggNOG" id="COG0216">
    <property type="taxonomic scope" value="Bacteria"/>
</dbReference>
<dbReference type="HOGENOM" id="CLU_036856_0_1_6"/>
<dbReference type="Proteomes" id="UP000000225">
    <property type="component" value="Chromosome"/>
</dbReference>
<dbReference type="GO" id="GO:0005737">
    <property type="term" value="C:cytoplasm"/>
    <property type="evidence" value="ECO:0007669"/>
    <property type="project" value="UniProtKB-SubCell"/>
</dbReference>
<dbReference type="GO" id="GO:0016149">
    <property type="term" value="F:translation release factor activity, codon specific"/>
    <property type="evidence" value="ECO:0007669"/>
    <property type="project" value="UniProtKB-UniRule"/>
</dbReference>
<dbReference type="FunFam" id="3.30.160.20:FF:000004">
    <property type="entry name" value="Peptide chain release factor 1"/>
    <property type="match status" value="1"/>
</dbReference>
<dbReference type="FunFam" id="3.30.70.1660:FF:000002">
    <property type="entry name" value="Peptide chain release factor 1"/>
    <property type="match status" value="1"/>
</dbReference>
<dbReference type="FunFam" id="3.30.70.1660:FF:000004">
    <property type="entry name" value="Peptide chain release factor 1"/>
    <property type="match status" value="1"/>
</dbReference>
<dbReference type="Gene3D" id="3.30.160.20">
    <property type="match status" value="1"/>
</dbReference>
<dbReference type="Gene3D" id="3.30.70.1660">
    <property type="match status" value="2"/>
</dbReference>
<dbReference type="Gene3D" id="6.10.140.1950">
    <property type="match status" value="1"/>
</dbReference>
<dbReference type="HAMAP" id="MF_00093">
    <property type="entry name" value="Rel_fac_1"/>
    <property type="match status" value="1"/>
</dbReference>
<dbReference type="InterPro" id="IPR005139">
    <property type="entry name" value="PCRF"/>
</dbReference>
<dbReference type="InterPro" id="IPR000352">
    <property type="entry name" value="Pep_chain_release_fac_I"/>
</dbReference>
<dbReference type="InterPro" id="IPR045853">
    <property type="entry name" value="Pep_chain_release_fac_I_sf"/>
</dbReference>
<dbReference type="InterPro" id="IPR050057">
    <property type="entry name" value="Prokaryotic/Mito_RF"/>
</dbReference>
<dbReference type="InterPro" id="IPR004373">
    <property type="entry name" value="RF-1"/>
</dbReference>
<dbReference type="NCBIfam" id="TIGR00019">
    <property type="entry name" value="prfA"/>
    <property type="match status" value="1"/>
</dbReference>
<dbReference type="NCBIfam" id="NF001859">
    <property type="entry name" value="PRK00591.1"/>
    <property type="match status" value="1"/>
</dbReference>
<dbReference type="PANTHER" id="PTHR43804">
    <property type="entry name" value="LD18447P"/>
    <property type="match status" value="1"/>
</dbReference>
<dbReference type="PANTHER" id="PTHR43804:SF7">
    <property type="entry name" value="LD18447P"/>
    <property type="match status" value="1"/>
</dbReference>
<dbReference type="Pfam" id="PF03462">
    <property type="entry name" value="PCRF"/>
    <property type="match status" value="1"/>
</dbReference>
<dbReference type="Pfam" id="PF00472">
    <property type="entry name" value="RF-1"/>
    <property type="match status" value="1"/>
</dbReference>
<dbReference type="SMART" id="SM00937">
    <property type="entry name" value="PCRF"/>
    <property type="match status" value="1"/>
</dbReference>
<dbReference type="SUPFAM" id="SSF75620">
    <property type="entry name" value="Release factor"/>
    <property type="match status" value="1"/>
</dbReference>
<dbReference type="PROSITE" id="PS00745">
    <property type="entry name" value="RF_PROK_I"/>
    <property type="match status" value="1"/>
</dbReference>
<name>RF1_AERS4</name>
<organism>
    <name type="scientific">Aeromonas salmonicida (strain A449)</name>
    <dbReference type="NCBI Taxonomy" id="382245"/>
    <lineage>
        <taxon>Bacteria</taxon>
        <taxon>Pseudomonadati</taxon>
        <taxon>Pseudomonadota</taxon>
        <taxon>Gammaproteobacteria</taxon>
        <taxon>Aeromonadales</taxon>
        <taxon>Aeromonadaceae</taxon>
        <taxon>Aeromonas</taxon>
    </lineage>
</organism>
<reference key="1">
    <citation type="journal article" date="2008" name="BMC Genomics">
        <title>The genome of Aeromonas salmonicida subsp. salmonicida A449: insights into the evolution of a fish pathogen.</title>
        <authorList>
            <person name="Reith M.E."/>
            <person name="Singh R.K."/>
            <person name="Curtis B."/>
            <person name="Boyd J.M."/>
            <person name="Bouevitch A."/>
            <person name="Kimball J."/>
            <person name="Munholland J."/>
            <person name="Murphy C."/>
            <person name="Sarty D."/>
            <person name="Williams J."/>
            <person name="Nash J.H."/>
            <person name="Johnson S.C."/>
            <person name="Brown L.L."/>
        </authorList>
    </citation>
    <scope>NUCLEOTIDE SEQUENCE [LARGE SCALE GENOMIC DNA]</scope>
    <source>
        <strain>A449</strain>
    </source>
</reference>